<dbReference type="EMBL" id="AM408590">
    <property type="protein sequence ID" value="CAL71380.1"/>
    <property type="molecule type" value="Genomic_DNA"/>
</dbReference>
<dbReference type="RefSeq" id="WP_003406906.1">
    <property type="nucleotide sequence ID" value="NC_008769.1"/>
</dbReference>
<dbReference type="SMR" id="A1KIC1"/>
<dbReference type="GeneID" id="45425309"/>
<dbReference type="KEGG" id="mbb:BCG_1393"/>
<dbReference type="HOGENOM" id="CLU_153743_1_0_11"/>
<dbReference type="Proteomes" id="UP000001472">
    <property type="component" value="Chromosome"/>
</dbReference>
<dbReference type="GO" id="GO:0030163">
    <property type="term" value="P:protein catabolic process"/>
    <property type="evidence" value="ECO:0007669"/>
    <property type="project" value="InterPro"/>
</dbReference>
<dbReference type="GO" id="GO:0006508">
    <property type="term" value="P:proteolysis"/>
    <property type="evidence" value="ECO:0007669"/>
    <property type="project" value="UniProtKB-UniRule"/>
</dbReference>
<dbReference type="FunFam" id="3.30.1390.10:FF:000004">
    <property type="entry name" value="ATP-dependent Clp protease adapter protein ClpS"/>
    <property type="match status" value="1"/>
</dbReference>
<dbReference type="Gene3D" id="3.30.1390.10">
    <property type="match status" value="1"/>
</dbReference>
<dbReference type="HAMAP" id="MF_00302">
    <property type="entry name" value="ClpS"/>
    <property type="match status" value="1"/>
</dbReference>
<dbReference type="InterPro" id="IPR022935">
    <property type="entry name" value="ClpS"/>
</dbReference>
<dbReference type="InterPro" id="IPR003769">
    <property type="entry name" value="ClpS_core"/>
</dbReference>
<dbReference type="InterPro" id="IPR014719">
    <property type="entry name" value="Ribosomal_bL12_C/ClpS-like"/>
</dbReference>
<dbReference type="NCBIfam" id="NF000668">
    <property type="entry name" value="PRK00033.1-1"/>
    <property type="match status" value="1"/>
</dbReference>
<dbReference type="Pfam" id="PF02617">
    <property type="entry name" value="ClpS"/>
    <property type="match status" value="1"/>
</dbReference>
<dbReference type="SUPFAM" id="SSF54736">
    <property type="entry name" value="ClpS-like"/>
    <property type="match status" value="1"/>
</dbReference>
<feature type="chain" id="PRO_0000300714" description="ATP-dependent Clp protease adapter protein ClpS">
    <location>
        <begin position="1"/>
        <end position="101"/>
    </location>
</feature>
<organism>
    <name type="scientific">Mycobacterium bovis (strain BCG / Pasteur 1173P2)</name>
    <dbReference type="NCBI Taxonomy" id="410289"/>
    <lineage>
        <taxon>Bacteria</taxon>
        <taxon>Bacillati</taxon>
        <taxon>Actinomycetota</taxon>
        <taxon>Actinomycetes</taxon>
        <taxon>Mycobacteriales</taxon>
        <taxon>Mycobacteriaceae</taxon>
        <taxon>Mycobacterium</taxon>
        <taxon>Mycobacterium tuberculosis complex</taxon>
    </lineage>
</organism>
<reference key="1">
    <citation type="journal article" date="2007" name="Proc. Natl. Acad. Sci. U.S.A.">
        <title>Genome plasticity of BCG and impact on vaccine efficacy.</title>
        <authorList>
            <person name="Brosch R."/>
            <person name="Gordon S.V."/>
            <person name="Garnier T."/>
            <person name="Eiglmeier K."/>
            <person name="Frigui W."/>
            <person name="Valenti P."/>
            <person name="Dos Santos S."/>
            <person name="Duthoy S."/>
            <person name="Lacroix C."/>
            <person name="Garcia-Pelayo C."/>
            <person name="Inwald J.K."/>
            <person name="Golby P."/>
            <person name="Garcia J.N."/>
            <person name="Hewinson R.G."/>
            <person name="Behr M.A."/>
            <person name="Quail M.A."/>
            <person name="Churcher C."/>
            <person name="Barrell B.G."/>
            <person name="Parkhill J."/>
            <person name="Cole S.T."/>
        </authorList>
    </citation>
    <scope>NUCLEOTIDE SEQUENCE [LARGE SCALE GENOMIC DNA]</scope>
    <source>
        <strain>BCG / Pasteur 1173P2</strain>
    </source>
</reference>
<sequence>MAVVSAPAKPGTTWQRESAPVDVTDRAWVTIVWDDPVNLMSYVTYVFQKLFGYSEPHATKLMLQVHNEGKAVVSAGSRESMEVDVSKLHAAGLWATMQQDR</sequence>
<gene>
    <name evidence="1" type="primary">clpS</name>
    <name type="ordered locus">BCG_1393</name>
</gene>
<proteinExistence type="inferred from homology"/>
<comment type="function">
    <text evidence="1">Involved in the modulation of the specificity of the ClpAP-mediated ATP-dependent protein degradation.</text>
</comment>
<comment type="subunit">
    <text evidence="1">Binds to the N-terminal domain of the chaperone ClpA.</text>
</comment>
<comment type="similarity">
    <text evidence="1">Belongs to the ClpS family.</text>
</comment>
<evidence type="ECO:0000255" key="1">
    <source>
        <dbReference type="HAMAP-Rule" id="MF_00302"/>
    </source>
</evidence>
<accession>A1KIC1</accession>
<name>CLPS_MYCBP</name>
<protein>
    <recommendedName>
        <fullName evidence="1">ATP-dependent Clp protease adapter protein ClpS</fullName>
    </recommendedName>
</protein>